<sequence length="366" mass="39471">MCRLSMPDAIVPFAKVSGLTSFAALAQVRRLLGVKKVGHTGTLDRFADGLLLLLVGGFTKLAPVMTRLEKSYEARIQFGVQTDTLDPEGAVVRCSLFPTFARVRAALPHFTGSIDQVPPEYSALKFGGVRASDRVRRGEAVCMKARRVFVFDLQVLGCEADLGEFKKTQAGRGAAIADLDLTRVRAVTLYVRCSAGFYVRALARDIAAACGSCAYVSHLRRTRIGPFDLAQAAGVSRLGSWTWGKERASCGAACFDVGAPPPPSSGGVATDSVSFGCEDLTVREIKQAVVSCDVDFANRIGLTACSVHAQYASRFLHGERIRACWFQSFGTRRPGERALVFSEGRCLGLIRKAANGFSYDAVFCTE</sequence>
<accession>B2S4C6</accession>
<keyword id="KW-0413">Isomerase</keyword>
<keyword id="KW-0819">tRNA processing</keyword>
<feature type="chain" id="PRO_1000136819" description="tRNA pseudouridine synthase B">
    <location>
        <begin position="1"/>
        <end position="366"/>
    </location>
</feature>
<feature type="active site" description="Nucleophile" evidence="1">
    <location>
        <position position="44"/>
    </location>
</feature>
<gene>
    <name evidence="1" type="primary">truB</name>
    <name type="ordered locus">TPASS_0889</name>
</gene>
<comment type="function">
    <text evidence="1">Responsible for synthesis of pseudouridine from uracil-55 in the psi GC loop of transfer RNAs.</text>
</comment>
<comment type="catalytic activity">
    <reaction evidence="1">
        <text>uridine(55) in tRNA = pseudouridine(55) in tRNA</text>
        <dbReference type="Rhea" id="RHEA:42532"/>
        <dbReference type="Rhea" id="RHEA-COMP:10101"/>
        <dbReference type="Rhea" id="RHEA-COMP:10102"/>
        <dbReference type="ChEBI" id="CHEBI:65314"/>
        <dbReference type="ChEBI" id="CHEBI:65315"/>
        <dbReference type="EC" id="5.4.99.25"/>
    </reaction>
</comment>
<comment type="similarity">
    <text evidence="1">Belongs to the pseudouridine synthase TruB family. Type 1 subfamily.</text>
</comment>
<organism>
    <name type="scientific">Treponema pallidum subsp. pallidum (strain SS14)</name>
    <dbReference type="NCBI Taxonomy" id="455434"/>
    <lineage>
        <taxon>Bacteria</taxon>
        <taxon>Pseudomonadati</taxon>
        <taxon>Spirochaetota</taxon>
        <taxon>Spirochaetia</taxon>
        <taxon>Spirochaetales</taxon>
        <taxon>Treponemataceae</taxon>
        <taxon>Treponema</taxon>
    </lineage>
</organism>
<dbReference type="EC" id="5.4.99.25" evidence="1"/>
<dbReference type="EMBL" id="CP000805">
    <property type="protein sequence ID" value="ACD71305.1"/>
    <property type="molecule type" value="Genomic_DNA"/>
</dbReference>
<dbReference type="SMR" id="B2S4C6"/>
<dbReference type="KEGG" id="tpp:TPASS_0889"/>
<dbReference type="PATRIC" id="fig|455434.6.peg.876"/>
<dbReference type="Proteomes" id="UP000001202">
    <property type="component" value="Chromosome"/>
</dbReference>
<dbReference type="GO" id="GO:0003723">
    <property type="term" value="F:RNA binding"/>
    <property type="evidence" value="ECO:0007669"/>
    <property type="project" value="InterPro"/>
</dbReference>
<dbReference type="GO" id="GO:0160148">
    <property type="term" value="F:tRNA pseudouridine(55) synthase activity"/>
    <property type="evidence" value="ECO:0007669"/>
    <property type="project" value="UniProtKB-EC"/>
</dbReference>
<dbReference type="GO" id="GO:1990481">
    <property type="term" value="P:mRNA pseudouridine synthesis"/>
    <property type="evidence" value="ECO:0007669"/>
    <property type="project" value="TreeGrafter"/>
</dbReference>
<dbReference type="GO" id="GO:0031119">
    <property type="term" value="P:tRNA pseudouridine synthesis"/>
    <property type="evidence" value="ECO:0007669"/>
    <property type="project" value="UniProtKB-UniRule"/>
</dbReference>
<dbReference type="Gene3D" id="3.30.2350.10">
    <property type="entry name" value="Pseudouridine synthase"/>
    <property type="match status" value="1"/>
</dbReference>
<dbReference type="HAMAP" id="MF_01080">
    <property type="entry name" value="TruB_bact"/>
    <property type="match status" value="1"/>
</dbReference>
<dbReference type="InterPro" id="IPR020103">
    <property type="entry name" value="PsdUridine_synth_cat_dom_sf"/>
</dbReference>
<dbReference type="InterPro" id="IPR002501">
    <property type="entry name" value="PsdUridine_synth_N"/>
</dbReference>
<dbReference type="InterPro" id="IPR014780">
    <property type="entry name" value="tRNA_psdUridine_synth_TruB"/>
</dbReference>
<dbReference type="InterPro" id="IPR032819">
    <property type="entry name" value="TruB_C"/>
</dbReference>
<dbReference type="NCBIfam" id="TIGR00431">
    <property type="entry name" value="TruB"/>
    <property type="match status" value="1"/>
</dbReference>
<dbReference type="PANTHER" id="PTHR13767:SF2">
    <property type="entry name" value="PSEUDOURIDYLATE SYNTHASE TRUB1"/>
    <property type="match status" value="1"/>
</dbReference>
<dbReference type="PANTHER" id="PTHR13767">
    <property type="entry name" value="TRNA-PSEUDOURIDINE SYNTHASE"/>
    <property type="match status" value="1"/>
</dbReference>
<dbReference type="Pfam" id="PF16198">
    <property type="entry name" value="TruB_C_2"/>
    <property type="match status" value="1"/>
</dbReference>
<dbReference type="Pfam" id="PF01509">
    <property type="entry name" value="TruB_N"/>
    <property type="match status" value="1"/>
</dbReference>
<dbReference type="SUPFAM" id="SSF55120">
    <property type="entry name" value="Pseudouridine synthase"/>
    <property type="match status" value="1"/>
</dbReference>
<name>TRUB_TREPS</name>
<reference key="1">
    <citation type="journal article" date="2008" name="BMC Microbiol.">
        <title>Complete genome sequence of Treponema pallidum ssp. pallidum strain SS14 determined with oligonucleotide arrays.</title>
        <authorList>
            <person name="Matejkova P."/>
            <person name="Strouhal M."/>
            <person name="Smajs D."/>
            <person name="Norris S.J."/>
            <person name="Palzkill T."/>
            <person name="Petrosino J.F."/>
            <person name="Sodergren E."/>
            <person name="Norton J.E."/>
            <person name="Singh J."/>
            <person name="Richmond T.A."/>
            <person name="Molla M.N."/>
            <person name="Albert T.J."/>
            <person name="Weinstock G.M."/>
        </authorList>
    </citation>
    <scope>NUCLEOTIDE SEQUENCE [LARGE SCALE GENOMIC DNA]</scope>
    <source>
        <strain>SS14</strain>
    </source>
</reference>
<protein>
    <recommendedName>
        <fullName evidence="1">tRNA pseudouridine synthase B</fullName>
        <ecNumber evidence="1">5.4.99.25</ecNumber>
    </recommendedName>
    <alternativeName>
        <fullName evidence="1">tRNA pseudouridine(55) synthase</fullName>
        <shortName evidence="1">Psi55 synthase</shortName>
    </alternativeName>
    <alternativeName>
        <fullName evidence="1">tRNA pseudouridylate synthase</fullName>
    </alternativeName>
    <alternativeName>
        <fullName evidence="1">tRNA-uridine isomerase</fullName>
    </alternativeName>
</protein>
<evidence type="ECO:0000255" key="1">
    <source>
        <dbReference type="HAMAP-Rule" id="MF_01080"/>
    </source>
</evidence>
<proteinExistence type="inferred from homology"/>